<proteinExistence type="inferred from homology"/>
<name>YVSG_BACSU</name>
<feature type="signal peptide" evidence="1">
    <location>
        <begin position="1"/>
        <end position="29"/>
    </location>
</feature>
<feature type="chain" id="PRO_0000013734" description="Uncharacterized protein YvsG">
    <location>
        <begin position="30"/>
        <end position="160"/>
    </location>
</feature>
<feature type="transmembrane region" description="Helical" evidence="1">
    <location>
        <begin position="67"/>
        <end position="87"/>
    </location>
</feature>
<feature type="transmembrane region" description="Helical" evidence="1">
    <location>
        <begin position="137"/>
        <end position="157"/>
    </location>
</feature>
<comment type="subcellular location">
    <subcellularLocation>
        <location evidence="2">Cell membrane</location>
        <topology evidence="2">Multi-pass membrane protein</topology>
    </subcellularLocation>
</comment>
<comment type="similarity">
    <text evidence="2">To E.coli YdjM.</text>
</comment>
<keyword id="KW-1003">Cell membrane</keyword>
<keyword id="KW-0472">Membrane</keyword>
<keyword id="KW-1185">Reference proteome</keyword>
<keyword id="KW-0732">Signal</keyword>
<keyword id="KW-0812">Transmembrane</keyword>
<keyword id="KW-1133">Transmembrane helix</keyword>
<sequence>MTGKTHIMGGIASCTAAAYYYGFDPVLMAASGAVGALIPDICHTQSKIGRKFPILSKVVSSVFGHRTFTHSLLFMLIMFFITSTYIPDKNISAGLMIGMASHLILDAWTVNGIKLLFPSTIRVRLPLYMKTGSFSEQLVLAGLTLASCYYFYMLFHGRMF</sequence>
<reference key="1">
    <citation type="journal article" date="1998" name="Microbiology">
        <title>The yvsA-yvqA (293 degrees - 289 degrees) region of the Bacillus subtilis chromosome containing genes involved in metal ion uptake and a putative sigma factor.</title>
        <authorList>
            <person name="Wipat A."/>
            <person name="Brignell C.S."/>
            <person name="Guy J.B."/>
            <person name="Rose M."/>
            <person name="Emmerson P.T."/>
            <person name="Harwood C.R."/>
        </authorList>
    </citation>
    <scope>NUCLEOTIDE SEQUENCE [GENOMIC DNA]</scope>
    <source>
        <strain>168</strain>
    </source>
</reference>
<reference key="2">
    <citation type="journal article" date="1997" name="Nature">
        <title>The complete genome sequence of the Gram-positive bacterium Bacillus subtilis.</title>
        <authorList>
            <person name="Kunst F."/>
            <person name="Ogasawara N."/>
            <person name="Moszer I."/>
            <person name="Albertini A.M."/>
            <person name="Alloni G."/>
            <person name="Azevedo V."/>
            <person name="Bertero M.G."/>
            <person name="Bessieres P."/>
            <person name="Bolotin A."/>
            <person name="Borchert S."/>
            <person name="Borriss R."/>
            <person name="Boursier L."/>
            <person name="Brans A."/>
            <person name="Braun M."/>
            <person name="Brignell S.C."/>
            <person name="Bron S."/>
            <person name="Brouillet S."/>
            <person name="Bruschi C.V."/>
            <person name="Caldwell B."/>
            <person name="Capuano V."/>
            <person name="Carter N.M."/>
            <person name="Choi S.-K."/>
            <person name="Codani J.-J."/>
            <person name="Connerton I.F."/>
            <person name="Cummings N.J."/>
            <person name="Daniel R.A."/>
            <person name="Denizot F."/>
            <person name="Devine K.M."/>
            <person name="Duesterhoeft A."/>
            <person name="Ehrlich S.D."/>
            <person name="Emmerson P.T."/>
            <person name="Entian K.-D."/>
            <person name="Errington J."/>
            <person name="Fabret C."/>
            <person name="Ferrari E."/>
            <person name="Foulger D."/>
            <person name="Fritz C."/>
            <person name="Fujita M."/>
            <person name="Fujita Y."/>
            <person name="Fuma S."/>
            <person name="Galizzi A."/>
            <person name="Galleron N."/>
            <person name="Ghim S.-Y."/>
            <person name="Glaser P."/>
            <person name="Goffeau A."/>
            <person name="Golightly E.J."/>
            <person name="Grandi G."/>
            <person name="Guiseppi G."/>
            <person name="Guy B.J."/>
            <person name="Haga K."/>
            <person name="Haiech J."/>
            <person name="Harwood C.R."/>
            <person name="Henaut A."/>
            <person name="Hilbert H."/>
            <person name="Holsappel S."/>
            <person name="Hosono S."/>
            <person name="Hullo M.-F."/>
            <person name="Itaya M."/>
            <person name="Jones L.-M."/>
            <person name="Joris B."/>
            <person name="Karamata D."/>
            <person name="Kasahara Y."/>
            <person name="Klaerr-Blanchard M."/>
            <person name="Klein C."/>
            <person name="Kobayashi Y."/>
            <person name="Koetter P."/>
            <person name="Koningstein G."/>
            <person name="Krogh S."/>
            <person name="Kumano M."/>
            <person name="Kurita K."/>
            <person name="Lapidus A."/>
            <person name="Lardinois S."/>
            <person name="Lauber J."/>
            <person name="Lazarevic V."/>
            <person name="Lee S.-M."/>
            <person name="Levine A."/>
            <person name="Liu H."/>
            <person name="Masuda S."/>
            <person name="Mauel C."/>
            <person name="Medigue C."/>
            <person name="Medina N."/>
            <person name="Mellado R.P."/>
            <person name="Mizuno M."/>
            <person name="Moestl D."/>
            <person name="Nakai S."/>
            <person name="Noback M."/>
            <person name="Noone D."/>
            <person name="O'Reilly M."/>
            <person name="Ogawa K."/>
            <person name="Ogiwara A."/>
            <person name="Oudega B."/>
            <person name="Park S.-H."/>
            <person name="Parro V."/>
            <person name="Pohl T.M."/>
            <person name="Portetelle D."/>
            <person name="Porwollik S."/>
            <person name="Prescott A.M."/>
            <person name="Presecan E."/>
            <person name="Pujic P."/>
            <person name="Purnelle B."/>
            <person name="Rapoport G."/>
            <person name="Rey M."/>
            <person name="Reynolds S."/>
            <person name="Rieger M."/>
            <person name="Rivolta C."/>
            <person name="Rocha E."/>
            <person name="Roche B."/>
            <person name="Rose M."/>
            <person name="Sadaie Y."/>
            <person name="Sato T."/>
            <person name="Scanlan E."/>
            <person name="Schleich S."/>
            <person name="Schroeter R."/>
            <person name="Scoffone F."/>
            <person name="Sekiguchi J."/>
            <person name="Sekowska A."/>
            <person name="Seror S.J."/>
            <person name="Serror P."/>
            <person name="Shin B.-S."/>
            <person name="Soldo B."/>
            <person name="Sorokin A."/>
            <person name="Tacconi E."/>
            <person name="Takagi T."/>
            <person name="Takahashi H."/>
            <person name="Takemaru K."/>
            <person name="Takeuchi M."/>
            <person name="Tamakoshi A."/>
            <person name="Tanaka T."/>
            <person name="Terpstra P."/>
            <person name="Tognoni A."/>
            <person name="Tosato V."/>
            <person name="Uchiyama S."/>
            <person name="Vandenbol M."/>
            <person name="Vannier F."/>
            <person name="Vassarotti A."/>
            <person name="Viari A."/>
            <person name="Wambutt R."/>
            <person name="Wedler E."/>
            <person name="Wedler H."/>
            <person name="Weitzenegger T."/>
            <person name="Winters P."/>
            <person name="Wipat A."/>
            <person name="Yamamoto H."/>
            <person name="Yamane K."/>
            <person name="Yasumoto K."/>
            <person name="Yata K."/>
            <person name="Yoshida K."/>
            <person name="Yoshikawa H.-F."/>
            <person name="Zumstein E."/>
            <person name="Yoshikawa H."/>
            <person name="Danchin A."/>
        </authorList>
    </citation>
    <scope>NUCLEOTIDE SEQUENCE [LARGE SCALE GENOMIC DNA]</scope>
    <source>
        <strain>168</strain>
    </source>
</reference>
<evidence type="ECO:0000255" key="1"/>
<evidence type="ECO:0000305" key="2"/>
<accession>O32205</accession>
<dbReference type="EMBL" id="AJ223978">
    <property type="protein sequence ID" value="CAA11717.1"/>
    <property type="molecule type" value="Genomic_DNA"/>
</dbReference>
<dbReference type="EMBL" id="AL009126">
    <property type="protein sequence ID" value="CAB15340.1"/>
    <property type="molecule type" value="Genomic_DNA"/>
</dbReference>
<dbReference type="PIR" id="C70048">
    <property type="entry name" value="C70048"/>
</dbReference>
<dbReference type="RefSeq" id="NP_391215.1">
    <property type="nucleotide sequence ID" value="NC_000964.3"/>
</dbReference>
<dbReference type="RefSeq" id="WP_003228444.1">
    <property type="nucleotide sequence ID" value="NZ_OZ025638.1"/>
</dbReference>
<dbReference type="FunCoup" id="O32205">
    <property type="interactions" value="38"/>
</dbReference>
<dbReference type="STRING" id="224308.BSU33350"/>
<dbReference type="PaxDb" id="224308-BSU33350"/>
<dbReference type="EnsemblBacteria" id="CAB15340">
    <property type="protein sequence ID" value="CAB15340"/>
    <property type="gene ID" value="BSU_33350"/>
</dbReference>
<dbReference type="GeneID" id="935995"/>
<dbReference type="KEGG" id="bsu:BSU33350"/>
<dbReference type="PATRIC" id="fig|224308.179.peg.3620"/>
<dbReference type="eggNOG" id="COG1988">
    <property type="taxonomic scope" value="Bacteria"/>
</dbReference>
<dbReference type="InParanoid" id="O32205"/>
<dbReference type="OrthoDB" id="5459053at2"/>
<dbReference type="PhylomeDB" id="O32205"/>
<dbReference type="BioCyc" id="BSUB:BSU33350-MONOMER"/>
<dbReference type="Proteomes" id="UP000001570">
    <property type="component" value="Chromosome"/>
</dbReference>
<dbReference type="GO" id="GO:0005886">
    <property type="term" value="C:plasma membrane"/>
    <property type="evidence" value="ECO:0000318"/>
    <property type="project" value="GO_Central"/>
</dbReference>
<dbReference type="InterPro" id="IPR007404">
    <property type="entry name" value="YdjM-like"/>
</dbReference>
<dbReference type="PANTHER" id="PTHR35531">
    <property type="entry name" value="INNER MEMBRANE PROTEIN YBCI-RELATED"/>
    <property type="match status" value="1"/>
</dbReference>
<dbReference type="PANTHER" id="PTHR35531:SF1">
    <property type="entry name" value="INNER MEMBRANE PROTEIN YBCI-RELATED"/>
    <property type="match status" value="1"/>
</dbReference>
<dbReference type="Pfam" id="PF04307">
    <property type="entry name" value="YdjM"/>
    <property type="match status" value="1"/>
</dbReference>
<protein>
    <recommendedName>
        <fullName>Uncharacterized protein YvsG</fullName>
    </recommendedName>
</protein>
<gene>
    <name type="primary">yvsG</name>
    <name type="ordered locus">BSU33350</name>
</gene>
<organism>
    <name type="scientific">Bacillus subtilis (strain 168)</name>
    <dbReference type="NCBI Taxonomy" id="224308"/>
    <lineage>
        <taxon>Bacteria</taxon>
        <taxon>Bacillati</taxon>
        <taxon>Bacillota</taxon>
        <taxon>Bacilli</taxon>
        <taxon>Bacillales</taxon>
        <taxon>Bacillaceae</taxon>
        <taxon>Bacillus</taxon>
    </lineage>
</organism>